<gene>
    <name evidence="1" type="primary">pnp</name>
    <name type="synonym">pnpA</name>
    <name type="ordered locus">M6_Spy1668</name>
</gene>
<evidence type="ECO:0000255" key="1">
    <source>
        <dbReference type="HAMAP-Rule" id="MF_01595"/>
    </source>
</evidence>
<evidence type="ECO:0000256" key="2">
    <source>
        <dbReference type="SAM" id="MobiDB-lite"/>
    </source>
</evidence>
<evidence type="ECO:0000269" key="3">
    <source ref="2"/>
</evidence>
<sequence>MSKQTFTTTFAGNPLVVEVGQVAKQANGATVVRYGESTVLTAAVMSKKMATGDFFPLQVNYEEKMYAAGKFPGGFMKREGRPSTDATLTARLIDRPIRPMFAEGFRNEVQVTNTVLSYDENASAPMAAMFGSSLALSISDIPFNGPIAGVQVGYIDGEFIINPDKEQMEASLLELTVAGSKEAINMVESGAKELSEDIMLEALLKGHQAIQELIAFQEQIVAVVGKEKAEVELLQVDADLQADIVAKYNAQLQKAVQVEEKKAREAATEAVKEMVKAEYEERYAEDENLATIMRDVAEILEQMEHAEVRRLITEDKIRPDGRKIDEIRPLDAVVDFLPKVHGSGLFTRGQTQALSILTLAPMGETQIIDGLAPEYKKRFLHHYNFPQYSVGETGRYGAAGRREIGHGALGERALEQVLPSLEEFPYAIRLVAEVLESNGSSSQASICAGTLALMAGGVPIKAPVAGIAMGLISDGTNYTVLTDIQGLEDHFGDMDFKVAGTREGITALQMDIKIAGITPQILEEALAQAKKARFEILDVIEATIAEPRPELAPTAPKIDTIKIDVDKIKVVIGKGGETIDKIIAETGVKIDIDDEGNVSIYSSDQAAINRTKEIIAGLVREAKVGEVYHAKVVRIEKFGAFVNLFDKTDALVHISEIAWTRTTNVSDVLEVGEDVDVKVIKIDEKGRVDASMKALIPRPPKPEKKEEKHD</sequence>
<organism>
    <name type="scientific">Streptococcus pyogenes serotype M6 (strain ATCC BAA-946 / MGAS10394)</name>
    <dbReference type="NCBI Taxonomy" id="286636"/>
    <lineage>
        <taxon>Bacteria</taxon>
        <taxon>Bacillati</taxon>
        <taxon>Bacillota</taxon>
        <taxon>Bacilli</taxon>
        <taxon>Lactobacillales</taxon>
        <taxon>Streptococcaceae</taxon>
        <taxon>Streptococcus</taxon>
    </lineage>
</organism>
<name>PNP_STRP6</name>
<keyword id="KW-0963">Cytoplasm</keyword>
<keyword id="KW-0903">Direct protein sequencing</keyword>
<keyword id="KW-0460">Magnesium</keyword>
<keyword id="KW-0479">Metal-binding</keyword>
<keyword id="KW-0548">Nucleotidyltransferase</keyword>
<keyword id="KW-0694">RNA-binding</keyword>
<keyword id="KW-0808">Transferase</keyword>
<comment type="function">
    <text evidence="1">Involved in mRNA degradation. Catalyzes the phosphorolysis of single-stranded polyribonucleotides processively in the 3'- to 5'-direction.</text>
</comment>
<comment type="catalytic activity">
    <reaction evidence="1">
        <text>RNA(n+1) + phosphate = RNA(n) + a ribonucleoside 5'-diphosphate</text>
        <dbReference type="Rhea" id="RHEA:22096"/>
        <dbReference type="Rhea" id="RHEA-COMP:14527"/>
        <dbReference type="Rhea" id="RHEA-COMP:17342"/>
        <dbReference type="ChEBI" id="CHEBI:43474"/>
        <dbReference type="ChEBI" id="CHEBI:57930"/>
        <dbReference type="ChEBI" id="CHEBI:140395"/>
        <dbReference type="EC" id="2.7.7.8"/>
    </reaction>
</comment>
<comment type="cofactor">
    <cofactor evidence="1">
        <name>Mg(2+)</name>
        <dbReference type="ChEBI" id="CHEBI:18420"/>
    </cofactor>
</comment>
<comment type="subcellular location">
    <subcellularLocation>
        <location evidence="1">Cytoplasm</location>
    </subcellularLocation>
</comment>
<comment type="mass spectrometry"/>
<comment type="similarity">
    <text evidence="1">Belongs to the polyribonucleotide nucleotidyltransferase family.</text>
</comment>
<proteinExistence type="evidence at protein level"/>
<protein>
    <recommendedName>
        <fullName evidence="1">Polyribonucleotide nucleotidyltransferase</fullName>
        <ecNumber evidence="1">2.7.7.8</ecNumber>
    </recommendedName>
    <alternativeName>
        <fullName evidence="1">Polynucleotide phosphorylase</fullName>
        <shortName evidence="1">PNPase</shortName>
    </alternativeName>
</protein>
<reference key="1">
    <citation type="journal article" date="2004" name="J. Infect. Dis.">
        <title>Progress toward characterization of the group A Streptococcus metagenome: complete genome sequence of a macrolide-resistant serotype M6 strain.</title>
        <authorList>
            <person name="Banks D.J."/>
            <person name="Porcella S.F."/>
            <person name="Barbian K.D."/>
            <person name="Beres S.B."/>
            <person name="Philips L.E."/>
            <person name="Voyich J.M."/>
            <person name="DeLeo F.R."/>
            <person name="Martin J.M."/>
            <person name="Somerville G.A."/>
            <person name="Musser J.M."/>
        </authorList>
    </citation>
    <scope>NUCLEOTIDE SEQUENCE [LARGE SCALE GENOMIC DNA]</scope>
    <source>
        <strain>ATCC BAA-946 / MGAS10394</strain>
    </source>
</reference>
<reference key="2">
    <citation type="submission" date="2000-05" db="UniProtKB">
        <title>Two-dimensional gel electrophoresis map of Streptococcus pyogenes proteins.</title>
        <authorList>
            <person name="Hogan D.A."/>
            <person name="Du P."/>
            <person name="Stevenson T.I."/>
            <person name="Whitton M."/>
            <person name="Kilby G.W."/>
            <person name="Rogers J."/>
            <person name="VanBogelen R.A."/>
        </authorList>
    </citation>
    <scope>PROTEIN SEQUENCE OF 324-339 AND 413-429</scope>
    <scope>MASS SPECTROMETRY</scope>
    <source>
        <strain>JRS4 / Serotype M6</strain>
    </source>
</reference>
<dbReference type="EC" id="2.7.7.8" evidence="1"/>
<dbReference type="EMBL" id="CP000003">
    <property type="protein sequence ID" value="AAT87803.1"/>
    <property type="molecule type" value="Genomic_DNA"/>
</dbReference>
<dbReference type="RefSeq" id="WP_011184977.1">
    <property type="nucleotide sequence ID" value="NC_006086.1"/>
</dbReference>
<dbReference type="SMR" id="Q5X9W0"/>
<dbReference type="KEGG" id="spa:M6_Spy1668"/>
<dbReference type="HOGENOM" id="CLU_004217_2_2_9"/>
<dbReference type="Proteomes" id="UP000001167">
    <property type="component" value="Chromosome"/>
</dbReference>
<dbReference type="GO" id="GO:0005829">
    <property type="term" value="C:cytosol"/>
    <property type="evidence" value="ECO:0007669"/>
    <property type="project" value="TreeGrafter"/>
</dbReference>
<dbReference type="GO" id="GO:0000175">
    <property type="term" value="F:3'-5'-RNA exonuclease activity"/>
    <property type="evidence" value="ECO:0007669"/>
    <property type="project" value="TreeGrafter"/>
</dbReference>
<dbReference type="GO" id="GO:0000287">
    <property type="term" value="F:magnesium ion binding"/>
    <property type="evidence" value="ECO:0007669"/>
    <property type="project" value="UniProtKB-UniRule"/>
</dbReference>
<dbReference type="GO" id="GO:0004654">
    <property type="term" value="F:polyribonucleotide nucleotidyltransferase activity"/>
    <property type="evidence" value="ECO:0007669"/>
    <property type="project" value="UniProtKB-UniRule"/>
</dbReference>
<dbReference type="GO" id="GO:0003723">
    <property type="term" value="F:RNA binding"/>
    <property type="evidence" value="ECO:0007669"/>
    <property type="project" value="UniProtKB-UniRule"/>
</dbReference>
<dbReference type="GO" id="GO:0006402">
    <property type="term" value="P:mRNA catabolic process"/>
    <property type="evidence" value="ECO:0007669"/>
    <property type="project" value="UniProtKB-UniRule"/>
</dbReference>
<dbReference type="GO" id="GO:0006396">
    <property type="term" value="P:RNA processing"/>
    <property type="evidence" value="ECO:0007669"/>
    <property type="project" value="InterPro"/>
</dbReference>
<dbReference type="CDD" id="cd02393">
    <property type="entry name" value="KH-I_PNPase"/>
    <property type="match status" value="1"/>
</dbReference>
<dbReference type="CDD" id="cd11363">
    <property type="entry name" value="RNase_PH_PNPase_1"/>
    <property type="match status" value="1"/>
</dbReference>
<dbReference type="CDD" id="cd11364">
    <property type="entry name" value="RNase_PH_PNPase_2"/>
    <property type="match status" value="1"/>
</dbReference>
<dbReference type="FunFam" id="2.40.50.140:FF:000023">
    <property type="entry name" value="Polyribonucleotide nucleotidyltransferase"/>
    <property type="match status" value="1"/>
</dbReference>
<dbReference type="FunFam" id="3.30.1370.10:FF:000001">
    <property type="entry name" value="Polyribonucleotide nucleotidyltransferase"/>
    <property type="match status" value="1"/>
</dbReference>
<dbReference type="FunFam" id="3.30.230.70:FF:000001">
    <property type="entry name" value="Polyribonucleotide nucleotidyltransferase"/>
    <property type="match status" value="1"/>
</dbReference>
<dbReference type="FunFam" id="3.30.230.70:FF:000002">
    <property type="entry name" value="Polyribonucleotide nucleotidyltransferase"/>
    <property type="match status" value="1"/>
</dbReference>
<dbReference type="Gene3D" id="3.30.230.70">
    <property type="entry name" value="GHMP Kinase, N-terminal domain"/>
    <property type="match status" value="2"/>
</dbReference>
<dbReference type="Gene3D" id="3.30.1370.10">
    <property type="entry name" value="K Homology domain, type 1"/>
    <property type="match status" value="1"/>
</dbReference>
<dbReference type="Gene3D" id="2.40.50.140">
    <property type="entry name" value="Nucleic acid-binding proteins"/>
    <property type="match status" value="1"/>
</dbReference>
<dbReference type="HAMAP" id="MF_01595">
    <property type="entry name" value="PNPase"/>
    <property type="match status" value="1"/>
</dbReference>
<dbReference type="InterPro" id="IPR001247">
    <property type="entry name" value="ExoRNase_PH_dom1"/>
</dbReference>
<dbReference type="InterPro" id="IPR015847">
    <property type="entry name" value="ExoRNase_PH_dom2"/>
</dbReference>
<dbReference type="InterPro" id="IPR036345">
    <property type="entry name" value="ExoRNase_PH_dom2_sf"/>
</dbReference>
<dbReference type="InterPro" id="IPR004087">
    <property type="entry name" value="KH_dom"/>
</dbReference>
<dbReference type="InterPro" id="IPR004088">
    <property type="entry name" value="KH_dom_type_1"/>
</dbReference>
<dbReference type="InterPro" id="IPR036612">
    <property type="entry name" value="KH_dom_type_1_sf"/>
</dbReference>
<dbReference type="InterPro" id="IPR012340">
    <property type="entry name" value="NA-bd_OB-fold"/>
</dbReference>
<dbReference type="InterPro" id="IPR012162">
    <property type="entry name" value="PNPase"/>
</dbReference>
<dbReference type="InterPro" id="IPR027408">
    <property type="entry name" value="PNPase/RNase_PH_dom_sf"/>
</dbReference>
<dbReference type="InterPro" id="IPR015848">
    <property type="entry name" value="PNPase_PH_RNA-bd_bac/org-type"/>
</dbReference>
<dbReference type="InterPro" id="IPR036456">
    <property type="entry name" value="PNPase_PH_RNA-bd_sf"/>
</dbReference>
<dbReference type="InterPro" id="IPR020568">
    <property type="entry name" value="Ribosomal_Su5_D2-typ_SF"/>
</dbReference>
<dbReference type="InterPro" id="IPR003029">
    <property type="entry name" value="S1_domain"/>
</dbReference>
<dbReference type="NCBIfam" id="TIGR03591">
    <property type="entry name" value="polynuc_phos"/>
    <property type="match status" value="1"/>
</dbReference>
<dbReference type="NCBIfam" id="NF008805">
    <property type="entry name" value="PRK11824.1"/>
    <property type="match status" value="1"/>
</dbReference>
<dbReference type="PANTHER" id="PTHR11252">
    <property type="entry name" value="POLYRIBONUCLEOTIDE NUCLEOTIDYLTRANSFERASE"/>
    <property type="match status" value="1"/>
</dbReference>
<dbReference type="PANTHER" id="PTHR11252:SF0">
    <property type="entry name" value="POLYRIBONUCLEOTIDE NUCLEOTIDYLTRANSFERASE 1, MITOCHONDRIAL"/>
    <property type="match status" value="1"/>
</dbReference>
<dbReference type="Pfam" id="PF00013">
    <property type="entry name" value="KH_1"/>
    <property type="match status" value="1"/>
</dbReference>
<dbReference type="Pfam" id="PF03726">
    <property type="entry name" value="PNPase"/>
    <property type="match status" value="1"/>
</dbReference>
<dbReference type="Pfam" id="PF01138">
    <property type="entry name" value="RNase_PH"/>
    <property type="match status" value="2"/>
</dbReference>
<dbReference type="Pfam" id="PF03725">
    <property type="entry name" value="RNase_PH_C"/>
    <property type="match status" value="2"/>
</dbReference>
<dbReference type="Pfam" id="PF00575">
    <property type="entry name" value="S1"/>
    <property type="match status" value="1"/>
</dbReference>
<dbReference type="PIRSF" id="PIRSF005499">
    <property type="entry name" value="PNPase"/>
    <property type="match status" value="1"/>
</dbReference>
<dbReference type="SMART" id="SM00322">
    <property type="entry name" value="KH"/>
    <property type="match status" value="1"/>
</dbReference>
<dbReference type="SMART" id="SM00316">
    <property type="entry name" value="S1"/>
    <property type="match status" value="1"/>
</dbReference>
<dbReference type="SUPFAM" id="SSF54791">
    <property type="entry name" value="Eukaryotic type KH-domain (KH-domain type I)"/>
    <property type="match status" value="1"/>
</dbReference>
<dbReference type="SUPFAM" id="SSF50249">
    <property type="entry name" value="Nucleic acid-binding proteins"/>
    <property type="match status" value="1"/>
</dbReference>
<dbReference type="SUPFAM" id="SSF46915">
    <property type="entry name" value="Polynucleotide phosphorylase/guanosine pentaphosphate synthase (PNPase/GPSI), domain 3"/>
    <property type="match status" value="1"/>
</dbReference>
<dbReference type="SUPFAM" id="SSF55666">
    <property type="entry name" value="Ribonuclease PH domain 2-like"/>
    <property type="match status" value="2"/>
</dbReference>
<dbReference type="SUPFAM" id="SSF54211">
    <property type="entry name" value="Ribosomal protein S5 domain 2-like"/>
    <property type="match status" value="2"/>
</dbReference>
<dbReference type="PROSITE" id="PS50084">
    <property type="entry name" value="KH_TYPE_1"/>
    <property type="match status" value="1"/>
</dbReference>
<dbReference type="PROSITE" id="PS50126">
    <property type="entry name" value="S1"/>
    <property type="match status" value="1"/>
</dbReference>
<feature type="chain" id="PRO_0000260066" description="Polyribonucleotide nucleotidyltransferase">
    <location>
        <begin position="1"/>
        <end position="710"/>
    </location>
</feature>
<feature type="domain" description="KH" evidence="1">
    <location>
        <begin position="556"/>
        <end position="615"/>
    </location>
</feature>
<feature type="domain" description="S1 motif" evidence="1">
    <location>
        <begin position="625"/>
        <end position="693"/>
    </location>
</feature>
<feature type="region of interest" description="Disordered" evidence="2">
    <location>
        <begin position="691"/>
        <end position="710"/>
    </location>
</feature>
<feature type="compositionally biased region" description="Basic and acidic residues" evidence="2">
    <location>
        <begin position="700"/>
        <end position="710"/>
    </location>
</feature>
<feature type="binding site" evidence="1">
    <location>
        <position position="489"/>
    </location>
    <ligand>
        <name>Mg(2+)</name>
        <dbReference type="ChEBI" id="CHEBI:18420"/>
    </ligand>
</feature>
<feature type="binding site" evidence="1">
    <location>
        <position position="495"/>
    </location>
    <ligand>
        <name>Mg(2+)</name>
        <dbReference type="ChEBI" id="CHEBI:18420"/>
    </ligand>
</feature>
<accession>Q5X9W0</accession>
<accession>P82589</accession>